<gene>
    <name evidence="1" type="primary">rpsE</name>
    <name type="ordered locus">Mpop_2147</name>
</gene>
<comment type="function">
    <text evidence="1">With S4 and S12 plays an important role in translational accuracy.</text>
</comment>
<comment type="function">
    <text evidence="1">Located at the back of the 30S subunit body where it stabilizes the conformation of the head with respect to the body.</text>
</comment>
<comment type="subunit">
    <text evidence="1">Part of the 30S ribosomal subunit. Contacts proteins S4 and S8.</text>
</comment>
<comment type="domain">
    <text>The N-terminal domain interacts with the head of the 30S subunit; the C-terminal domain interacts with the body and contacts protein S4. The interaction surface between S4 and S5 is involved in control of translational fidelity.</text>
</comment>
<comment type="similarity">
    <text evidence="1">Belongs to the universal ribosomal protein uS5 family.</text>
</comment>
<organism>
    <name type="scientific">Methylorubrum populi (strain ATCC BAA-705 / NCIMB 13946 / BJ001)</name>
    <name type="common">Methylobacterium populi</name>
    <dbReference type="NCBI Taxonomy" id="441620"/>
    <lineage>
        <taxon>Bacteria</taxon>
        <taxon>Pseudomonadati</taxon>
        <taxon>Pseudomonadota</taxon>
        <taxon>Alphaproteobacteria</taxon>
        <taxon>Hyphomicrobiales</taxon>
        <taxon>Methylobacteriaceae</taxon>
        <taxon>Methylorubrum</taxon>
    </lineage>
</organism>
<proteinExistence type="inferred from homology"/>
<reference key="1">
    <citation type="submission" date="2008-04" db="EMBL/GenBank/DDBJ databases">
        <title>Complete sequence of chromosome of Methylobacterium populi BJ001.</title>
        <authorList>
            <consortium name="US DOE Joint Genome Institute"/>
            <person name="Copeland A."/>
            <person name="Lucas S."/>
            <person name="Lapidus A."/>
            <person name="Glavina del Rio T."/>
            <person name="Dalin E."/>
            <person name="Tice H."/>
            <person name="Bruce D."/>
            <person name="Goodwin L."/>
            <person name="Pitluck S."/>
            <person name="Chertkov O."/>
            <person name="Brettin T."/>
            <person name="Detter J.C."/>
            <person name="Han C."/>
            <person name="Kuske C.R."/>
            <person name="Schmutz J."/>
            <person name="Larimer F."/>
            <person name="Land M."/>
            <person name="Hauser L."/>
            <person name="Kyrpides N."/>
            <person name="Mikhailova N."/>
            <person name="Marx C."/>
            <person name="Richardson P."/>
        </authorList>
    </citation>
    <scope>NUCLEOTIDE SEQUENCE [LARGE SCALE GENOMIC DNA]</scope>
    <source>
        <strain>ATCC BAA-705 / NCIMB 13946 / BJ001</strain>
    </source>
</reference>
<dbReference type="EMBL" id="CP001029">
    <property type="protein sequence ID" value="ACB80309.1"/>
    <property type="molecule type" value="Genomic_DNA"/>
</dbReference>
<dbReference type="RefSeq" id="WP_003597131.1">
    <property type="nucleotide sequence ID" value="NC_010725.1"/>
</dbReference>
<dbReference type="SMR" id="B1Z776"/>
<dbReference type="STRING" id="441620.Mpop_2147"/>
<dbReference type="KEGG" id="mpo:Mpop_2147"/>
<dbReference type="eggNOG" id="COG0098">
    <property type="taxonomic scope" value="Bacteria"/>
</dbReference>
<dbReference type="HOGENOM" id="CLU_065898_2_2_5"/>
<dbReference type="OrthoDB" id="9809045at2"/>
<dbReference type="Proteomes" id="UP000007136">
    <property type="component" value="Chromosome"/>
</dbReference>
<dbReference type="GO" id="GO:0015935">
    <property type="term" value="C:small ribosomal subunit"/>
    <property type="evidence" value="ECO:0007669"/>
    <property type="project" value="InterPro"/>
</dbReference>
<dbReference type="GO" id="GO:0019843">
    <property type="term" value="F:rRNA binding"/>
    <property type="evidence" value="ECO:0007669"/>
    <property type="project" value="UniProtKB-UniRule"/>
</dbReference>
<dbReference type="GO" id="GO:0003735">
    <property type="term" value="F:structural constituent of ribosome"/>
    <property type="evidence" value="ECO:0007669"/>
    <property type="project" value="InterPro"/>
</dbReference>
<dbReference type="GO" id="GO:0006412">
    <property type="term" value="P:translation"/>
    <property type="evidence" value="ECO:0007669"/>
    <property type="project" value="UniProtKB-UniRule"/>
</dbReference>
<dbReference type="FunFam" id="3.30.160.20:FF:000001">
    <property type="entry name" value="30S ribosomal protein S5"/>
    <property type="match status" value="1"/>
</dbReference>
<dbReference type="FunFam" id="3.30.230.10:FF:000002">
    <property type="entry name" value="30S ribosomal protein S5"/>
    <property type="match status" value="1"/>
</dbReference>
<dbReference type="Gene3D" id="3.30.160.20">
    <property type="match status" value="1"/>
</dbReference>
<dbReference type="Gene3D" id="3.30.230.10">
    <property type="match status" value="1"/>
</dbReference>
<dbReference type="HAMAP" id="MF_01307_B">
    <property type="entry name" value="Ribosomal_uS5_B"/>
    <property type="match status" value="1"/>
</dbReference>
<dbReference type="InterPro" id="IPR020568">
    <property type="entry name" value="Ribosomal_Su5_D2-typ_SF"/>
</dbReference>
<dbReference type="InterPro" id="IPR000851">
    <property type="entry name" value="Ribosomal_uS5"/>
</dbReference>
<dbReference type="InterPro" id="IPR005712">
    <property type="entry name" value="Ribosomal_uS5_bac-type"/>
</dbReference>
<dbReference type="InterPro" id="IPR005324">
    <property type="entry name" value="Ribosomal_uS5_C"/>
</dbReference>
<dbReference type="InterPro" id="IPR013810">
    <property type="entry name" value="Ribosomal_uS5_N"/>
</dbReference>
<dbReference type="InterPro" id="IPR018192">
    <property type="entry name" value="Ribosomal_uS5_N_CS"/>
</dbReference>
<dbReference type="InterPro" id="IPR014721">
    <property type="entry name" value="Ribsml_uS5_D2-typ_fold_subgr"/>
</dbReference>
<dbReference type="NCBIfam" id="TIGR01021">
    <property type="entry name" value="rpsE_bact"/>
    <property type="match status" value="1"/>
</dbReference>
<dbReference type="PANTHER" id="PTHR48277">
    <property type="entry name" value="MITOCHONDRIAL RIBOSOMAL PROTEIN S5"/>
    <property type="match status" value="1"/>
</dbReference>
<dbReference type="PANTHER" id="PTHR48277:SF1">
    <property type="entry name" value="MITOCHONDRIAL RIBOSOMAL PROTEIN S5"/>
    <property type="match status" value="1"/>
</dbReference>
<dbReference type="Pfam" id="PF00333">
    <property type="entry name" value="Ribosomal_S5"/>
    <property type="match status" value="1"/>
</dbReference>
<dbReference type="Pfam" id="PF03719">
    <property type="entry name" value="Ribosomal_S5_C"/>
    <property type="match status" value="1"/>
</dbReference>
<dbReference type="SUPFAM" id="SSF54768">
    <property type="entry name" value="dsRNA-binding domain-like"/>
    <property type="match status" value="1"/>
</dbReference>
<dbReference type="SUPFAM" id="SSF54211">
    <property type="entry name" value="Ribosomal protein S5 domain 2-like"/>
    <property type="match status" value="1"/>
</dbReference>
<dbReference type="PROSITE" id="PS00585">
    <property type="entry name" value="RIBOSOMAL_S5"/>
    <property type="match status" value="1"/>
</dbReference>
<dbReference type="PROSITE" id="PS50881">
    <property type="entry name" value="S5_DSRBD"/>
    <property type="match status" value="1"/>
</dbReference>
<sequence length="192" mass="20809">MAREREGRRRDDREERDSEFVDKLVHINRVAKVVKGGRRFGFAALVVVGDQKGRVGFGHGKAREVPEAIRKATEAAKRGLIRVSLREGRTLHHDVNGRHGAGKVILRAAPQGTGIIAGGPMRAVFETLGMQDVVAKSLGSSNPYNLVRATFDALKNEDSPRSVAARRGLKVSALQARRRDADPADTSDAAVA</sequence>
<keyword id="KW-0687">Ribonucleoprotein</keyword>
<keyword id="KW-0689">Ribosomal protein</keyword>
<keyword id="KW-0694">RNA-binding</keyword>
<keyword id="KW-0699">rRNA-binding</keyword>
<accession>B1Z776</accession>
<protein>
    <recommendedName>
        <fullName evidence="1">Small ribosomal subunit protein uS5</fullName>
    </recommendedName>
    <alternativeName>
        <fullName evidence="3">30S ribosomal protein S5</fullName>
    </alternativeName>
</protein>
<feature type="chain" id="PRO_1000140868" description="Small ribosomal subunit protein uS5">
    <location>
        <begin position="1"/>
        <end position="192"/>
    </location>
</feature>
<feature type="domain" description="S5 DRBM" evidence="1">
    <location>
        <begin position="20"/>
        <end position="83"/>
    </location>
</feature>
<feature type="region of interest" description="Disordered" evidence="2">
    <location>
        <begin position="162"/>
        <end position="192"/>
    </location>
</feature>
<evidence type="ECO:0000255" key="1">
    <source>
        <dbReference type="HAMAP-Rule" id="MF_01307"/>
    </source>
</evidence>
<evidence type="ECO:0000256" key="2">
    <source>
        <dbReference type="SAM" id="MobiDB-lite"/>
    </source>
</evidence>
<evidence type="ECO:0000305" key="3"/>
<name>RS5_METPB</name>